<name>RLR43_PLAVT</name>
<evidence type="ECO:0000255" key="1"/>
<evidence type="ECO:0000269" key="2">
    <source>
    </source>
</evidence>
<evidence type="ECO:0000303" key="3">
    <source>
    </source>
</evidence>
<evidence type="ECO:0000305" key="4"/>
<evidence type="ECO:0000305" key="5">
    <source>
    </source>
</evidence>
<gene>
    <name evidence="3" type="primary">RXLR43</name>
</gene>
<reference key="1">
    <citation type="journal article" date="2018" name="Front. Plant Sci.">
        <title>In planta functional analysis and subcellular localization of the oomycete pathogen Plasmopara viticola candidate RXLR effector repertoire.</title>
        <authorList>
            <person name="Liu Y."/>
            <person name="Lan X."/>
            <person name="Song S."/>
            <person name="Yin L."/>
            <person name="Dry I.B."/>
            <person name="Qu J."/>
            <person name="Xiang J."/>
            <person name="Lu J."/>
        </authorList>
    </citation>
    <scope>NUCLEOTIDE SEQUENCE [MRNA]</scope>
    <scope>DOMAIN</scope>
    <scope>FUNCTION</scope>
    <scope>SUBCELLULAR LOCATION</scope>
</reference>
<dbReference type="SMR" id="P0CV11"/>
<dbReference type="GO" id="GO:0005576">
    <property type="term" value="C:extracellular region"/>
    <property type="evidence" value="ECO:0007669"/>
    <property type="project" value="UniProtKB-SubCell"/>
</dbReference>
<dbReference type="GO" id="GO:0030430">
    <property type="term" value="C:host cell cytoplasm"/>
    <property type="evidence" value="ECO:0007669"/>
    <property type="project" value="UniProtKB-SubCell"/>
</dbReference>
<dbReference type="GO" id="GO:0042025">
    <property type="term" value="C:host cell nucleus"/>
    <property type="evidence" value="ECO:0007669"/>
    <property type="project" value="UniProtKB-SubCell"/>
</dbReference>
<protein>
    <recommendedName>
        <fullName evidence="3">Secreted RxLR effector protein 43</fullName>
    </recommendedName>
</protein>
<proteinExistence type="evidence at transcript level"/>
<organism>
    <name type="scientific">Plasmopara viticola</name>
    <name type="common">Downy mildew of grapevine</name>
    <name type="synonym">Botrytis viticola</name>
    <dbReference type="NCBI Taxonomy" id="143451"/>
    <lineage>
        <taxon>Eukaryota</taxon>
        <taxon>Sar</taxon>
        <taxon>Stramenopiles</taxon>
        <taxon>Oomycota</taxon>
        <taxon>Peronosporales</taxon>
        <taxon>Peronosporaceae</taxon>
        <taxon>Plasmopara</taxon>
    </lineage>
</organism>
<sequence length="145" mass="16183">MKVTMALAALCVALQAPCIGSESTPSNLNNRHLRHEHDSNTPLQRRDEALVPAHRVYDPVSGLACSLVGKCMVCPTSEKDESYCRETGYRQELDCPRVEDDVVHTKSVNQRTTRFRPCSFAEPARPGVAFVKFEVGNLRTLLQKL</sequence>
<keyword id="KW-1035">Host cytoplasm</keyword>
<keyword id="KW-1048">Host nucleus</keyword>
<keyword id="KW-0964">Secreted</keyword>
<keyword id="KW-0732">Signal</keyword>
<keyword id="KW-0843">Virulence</keyword>
<feature type="signal peptide" evidence="1">
    <location>
        <begin position="1"/>
        <end position="20"/>
    </location>
</feature>
<feature type="chain" id="PRO_0000447920" description="Secreted RxLR effector protein 43">
    <location>
        <begin position="21"/>
        <end position="145"/>
    </location>
</feature>
<feature type="short sequence motif" description="RxLR" evidence="5">
    <location>
        <begin position="31"/>
        <end position="34"/>
    </location>
</feature>
<accession>P0CV11</accession>
<comment type="function">
    <text evidence="2">Secreted effector that completely suppresses the host cell death induced by cell death-inducing proteins.</text>
</comment>
<comment type="subcellular location">
    <subcellularLocation>
        <location evidence="2">Secreted</location>
    </subcellularLocation>
    <subcellularLocation>
        <location evidence="2">Host nucleus</location>
    </subcellularLocation>
    <subcellularLocation>
        <location evidence="2">Host cytoplasm</location>
    </subcellularLocation>
</comment>
<comment type="domain">
    <text evidence="5">Has the canonical translocation RxLR motif, but lacks the canonical EER motif, which characterizes most oomycete effectors identified so far.</text>
</comment>
<comment type="similarity">
    <text evidence="4">Belongs to the RxLR effector family.</text>
</comment>